<accession>P0ACJ0</accession>
<accession>P19494</accession>
<gene>
    <name type="primary">lrp</name>
    <name type="synonym">alsB</name>
    <name type="synonym">ihb</name>
    <name type="synonym">livR</name>
    <name type="synonym">oppI</name>
    <name type="ordered locus">b0889</name>
    <name type="ordered locus">JW0872</name>
</gene>
<reference key="1">
    <citation type="journal article" date="1991" name="J. Biol. Chem.">
        <title>Characterization of Lrp, and Escherichia coli regulatory protein that mediates a global response to leucine.</title>
        <authorList>
            <person name="Willins D.A."/>
            <person name="Ryan C."/>
            <person name="Platko J.V."/>
            <person name="Calvo J.M."/>
        </authorList>
    </citation>
    <scope>NUCLEOTIDE SEQUENCE [GENOMIC DNA]</scope>
</reference>
<reference key="2">
    <citation type="submission" date="1992-05" db="EMBL/GenBank/DDBJ databases">
        <authorList>
            <person name="Ito K."/>
            <person name="Kawakami K."/>
            <person name="Nakamura Y."/>
        </authorList>
    </citation>
    <scope>NUCLEOTIDE SEQUENCE [GENOMIC DNA]</scope>
</reference>
<reference key="3">
    <citation type="journal article" date="1996" name="DNA Res.">
        <title>A 718-kb DNA sequence of the Escherichia coli K-12 genome corresponding to the 12.7-28.0 min region on the linkage map.</title>
        <authorList>
            <person name="Oshima T."/>
            <person name="Aiba H."/>
            <person name="Baba T."/>
            <person name="Fujita K."/>
            <person name="Hayashi K."/>
            <person name="Honjo A."/>
            <person name="Ikemoto K."/>
            <person name="Inada T."/>
            <person name="Itoh T."/>
            <person name="Kajihara M."/>
            <person name="Kanai K."/>
            <person name="Kashimoto K."/>
            <person name="Kimura S."/>
            <person name="Kitagawa M."/>
            <person name="Makino K."/>
            <person name="Masuda S."/>
            <person name="Miki T."/>
            <person name="Mizobuchi K."/>
            <person name="Mori H."/>
            <person name="Motomura K."/>
            <person name="Nakamura Y."/>
            <person name="Nashimoto H."/>
            <person name="Nishio Y."/>
            <person name="Saito N."/>
            <person name="Sampei G."/>
            <person name="Seki Y."/>
            <person name="Tagami H."/>
            <person name="Takemoto K."/>
            <person name="Wada C."/>
            <person name="Yamamoto Y."/>
            <person name="Yano M."/>
            <person name="Horiuchi T."/>
        </authorList>
    </citation>
    <scope>NUCLEOTIDE SEQUENCE [LARGE SCALE GENOMIC DNA]</scope>
    <source>
        <strain>K12 / W3110 / ATCC 27325 / DSM 5911</strain>
    </source>
</reference>
<reference key="4">
    <citation type="journal article" date="1997" name="Science">
        <title>The complete genome sequence of Escherichia coli K-12.</title>
        <authorList>
            <person name="Blattner F.R."/>
            <person name="Plunkett G. III"/>
            <person name="Bloch C.A."/>
            <person name="Perna N.T."/>
            <person name="Burland V."/>
            <person name="Riley M."/>
            <person name="Collado-Vides J."/>
            <person name="Glasner J.D."/>
            <person name="Rode C.K."/>
            <person name="Mayhew G.F."/>
            <person name="Gregor J."/>
            <person name="Davis N.W."/>
            <person name="Kirkpatrick H.A."/>
            <person name="Goeden M.A."/>
            <person name="Rose D.J."/>
            <person name="Mau B."/>
            <person name="Shao Y."/>
        </authorList>
    </citation>
    <scope>NUCLEOTIDE SEQUENCE [LARGE SCALE GENOMIC DNA]</scope>
    <source>
        <strain>K12 / MG1655 / ATCC 47076</strain>
    </source>
</reference>
<reference key="5">
    <citation type="journal article" date="2006" name="Mol. Syst. Biol.">
        <title>Highly accurate genome sequences of Escherichia coli K-12 strains MG1655 and W3110.</title>
        <authorList>
            <person name="Hayashi K."/>
            <person name="Morooka N."/>
            <person name="Yamamoto Y."/>
            <person name="Fujita K."/>
            <person name="Isono K."/>
            <person name="Choi S."/>
            <person name="Ohtsubo E."/>
            <person name="Baba T."/>
            <person name="Wanner B.L."/>
            <person name="Mori H."/>
            <person name="Horiuchi T."/>
        </authorList>
    </citation>
    <scope>NUCLEOTIDE SEQUENCE [LARGE SCALE GENOMIC DNA]</scope>
    <source>
        <strain>K12 / W3110 / ATCC 27325 / DSM 5911</strain>
    </source>
</reference>
<reference key="6">
    <citation type="journal article" date="1990" name="J. Bacteriol.">
        <title>The ilvIH operon of Escherichia coli is positively regulated.</title>
        <authorList>
            <person name="Platko J.V."/>
            <person name="Willins D.A."/>
            <person name="Calvo J.M."/>
        </authorList>
    </citation>
    <scope>PROTEIN SEQUENCE OF N-TERMINUS</scope>
</reference>
<reference key="7">
    <citation type="journal article" date="1992" name="J. Bacteriol.">
        <title>Lrp, a leucine-responsive protein, regulates branched-chain amino acid transport genes in Escherichia coli.</title>
        <authorList>
            <person name="Haney S.A."/>
            <person name="Platko J.V."/>
            <person name="Oxender D.L."/>
            <person name="Calvo J.M."/>
        </authorList>
    </citation>
    <scope>CHARACTERIZATION</scope>
</reference>
<reference key="8">
    <citation type="journal article" date="1993" name="Trends Biochem. Sci.">
        <title>The leucine-responsive regulatory protein: more than a regulator?</title>
        <authorList>
            <person name="D'Ari R."/>
            <person name="Lin R.T."/>
            <person name="Newman E.B."/>
        </authorList>
    </citation>
    <scope>REVIEW</scope>
</reference>
<reference key="9">
    <citation type="journal article" date="1997" name="Electrophoresis">
        <title>Escherichia coli proteome analysis using the gene-protein database.</title>
        <authorList>
            <person name="VanBogelen R.A."/>
            <person name="Abshire K.Z."/>
            <person name="Moldover B."/>
            <person name="Olson E.R."/>
            <person name="Neidhardt F.C."/>
        </authorList>
    </citation>
    <scope>IDENTIFICATION BY 2D-GEL</scope>
</reference>
<keyword id="KW-0002">3D-structure</keyword>
<keyword id="KW-0010">Activator</keyword>
<keyword id="KW-0903">Direct protein sequencing</keyword>
<keyword id="KW-0238">DNA-binding</keyword>
<keyword id="KW-1185">Reference proteome</keyword>
<keyword id="KW-0804">Transcription</keyword>
<keyword id="KW-0805">Transcription regulation</keyword>
<dbReference type="EMBL" id="M35869">
    <property type="protein sequence ID" value="AAA24089.1"/>
    <property type="molecule type" value="Genomic_DNA"/>
</dbReference>
<dbReference type="EMBL" id="D11105">
    <property type="protein sequence ID" value="BAA01880.1"/>
    <property type="molecule type" value="Genomic_DNA"/>
</dbReference>
<dbReference type="EMBL" id="U00096">
    <property type="protein sequence ID" value="AAC73975.1"/>
    <property type="molecule type" value="Genomic_DNA"/>
</dbReference>
<dbReference type="EMBL" id="AP009048">
    <property type="protein sequence ID" value="BAA35614.1"/>
    <property type="molecule type" value="Genomic_DNA"/>
</dbReference>
<dbReference type="PIR" id="JH0412">
    <property type="entry name" value="RGECLR"/>
</dbReference>
<dbReference type="RefSeq" id="NP_415409.1">
    <property type="nucleotide sequence ID" value="NC_000913.3"/>
</dbReference>
<dbReference type="RefSeq" id="WP_000228473.1">
    <property type="nucleotide sequence ID" value="NZ_STEB01000006.1"/>
</dbReference>
<dbReference type="PDB" id="2GQQ">
    <property type="method" value="X-ray"/>
    <property type="resolution" value="3.20 A"/>
    <property type="chains" value="A/B/C/D=2-164"/>
</dbReference>
<dbReference type="PDB" id="2L4A">
    <property type="method" value="NMR"/>
    <property type="chains" value="A=1-66"/>
</dbReference>
<dbReference type="PDBsum" id="2GQQ"/>
<dbReference type="PDBsum" id="2L4A"/>
<dbReference type="BMRB" id="P0ACJ0"/>
<dbReference type="SMR" id="P0ACJ0"/>
<dbReference type="BioGRID" id="4260697">
    <property type="interactions" value="145"/>
</dbReference>
<dbReference type="BioGRID" id="853295">
    <property type="interactions" value="5"/>
</dbReference>
<dbReference type="DIP" id="DIP-35825N"/>
<dbReference type="FunCoup" id="P0ACJ0">
    <property type="interactions" value="607"/>
</dbReference>
<dbReference type="IntAct" id="P0ACJ0">
    <property type="interactions" value="12"/>
</dbReference>
<dbReference type="STRING" id="511145.b0889"/>
<dbReference type="jPOST" id="P0ACJ0"/>
<dbReference type="PaxDb" id="511145-b0889"/>
<dbReference type="EnsemblBacteria" id="AAC73975">
    <property type="protein sequence ID" value="AAC73975"/>
    <property type="gene ID" value="b0889"/>
</dbReference>
<dbReference type="GeneID" id="949051"/>
<dbReference type="GeneID" id="97601058"/>
<dbReference type="KEGG" id="ecj:JW0872"/>
<dbReference type="KEGG" id="eco:b0889"/>
<dbReference type="KEGG" id="ecoc:C3026_05505"/>
<dbReference type="PATRIC" id="fig|1411691.4.peg.1388"/>
<dbReference type="EchoBASE" id="EB0542"/>
<dbReference type="eggNOG" id="COG1522">
    <property type="taxonomic scope" value="Bacteria"/>
</dbReference>
<dbReference type="HOGENOM" id="CLU_091233_0_0_6"/>
<dbReference type="InParanoid" id="P0ACJ0"/>
<dbReference type="OMA" id="GPSKLHM"/>
<dbReference type="OrthoDB" id="166264at2"/>
<dbReference type="PhylomeDB" id="P0ACJ0"/>
<dbReference type="BioCyc" id="EcoCyc:PD00353"/>
<dbReference type="EvolutionaryTrace" id="P0ACJ0"/>
<dbReference type="PRO" id="PR:P0ACJ0"/>
<dbReference type="Proteomes" id="UP000000625">
    <property type="component" value="Chromosome"/>
</dbReference>
<dbReference type="CollecTF" id="EXPREG_00000840"/>
<dbReference type="GO" id="GO:0005829">
    <property type="term" value="C:cytosol"/>
    <property type="evidence" value="ECO:0000314"/>
    <property type="project" value="EcoCyc"/>
</dbReference>
<dbReference type="GO" id="GO:0032993">
    <property type="term" value="C:protein-DNA complex"/>
    <property type="evidence" value="ECO:0000315"/>
    <property type="project" value="CollecTF"/>
</dbReference>
<dbReference type="GO" id="GO:0001216">
    <property type="term" value="F:DNA-binding transcription activator activity"/>
    <property type="evidence" value="ECO:0000315"/>
    <property type="project" value="CollecTF"/>
</dbReference>
<dbReference type="GO" id="GO:0001217">
    <property type="term" value="F:DNA-binding transcription repressor activity"/>
    <property type="evidence" value="ECO:0000315"/>
    <property type="project" value="CollecTF"/>
</dbReference>
<dbReference type="GO" id="GO:0042802">
    <property type="term" value="F:identical protein binding"/>
    <property type="evidence" value="ECO:0000353"/>
    <property type="project" value="IntAct"/>
</dbReference>
<dbReference type="GO" id="GO:0043565">
    <property type="term" value="F:sequence-specific DNA binding"/>
    <property type="evidence" value="ECO:0000314"/>
    <property type="project" value="EcoliWiki"/>
</dbReference>
<dbReference type="GO" id="GO:0000976">
    <property type="term" value="F:transcription cis-regulatory region binding"/>
    <property type="evidence" value="ECO:0000315"/>
    <property type="project" value="CollecTF"/>
</dbReference>
<dbReference type="GO" id="GO:0006524">
    <property type="term" value="P:alanine catabolic process"/>
    <property type="evidence" value="ECO:0000318"/>
    <property type="project" value="GO_Central"/>
</dbReference>
<dbReference type="GO" id="GO:0045892">
    <property type="term" value="P:negative regulation of DNA-templated transcription"/>
    <property type="evidence" value="ECO:0000270"/>
    <property type="project" value="CollecTF"/>
</dbReference>
<dbReference type="GO" id="GO:0006355">
    <property type="term" value="P:regulation of DNA-templated transcription"/>
    <property type="evidence" value="ECO:0000315"/>
    <property type="project" value="EcoliWiki"/>
</dbReference>
<dbReference type="GO" id="GO:0043201">
    <property type="term" value="P:response to L-leucine"/>
    <property type="evidence" value="ECO:0000315"/>
    <property type="project" value="EcoliWiki"/>
</dbReference>
<dbReference type="CDD" id="cd00090">
    <property type="entry name" value="HTH_ARSR"/>
    <property type="match status" value="1"/>
</dbReference>
<dbReference type="FunFam" id="1.10.10.10:FF:000015">
    <property type="entry name" value="Leucine-responsive transcriptional regulator Lrp"/>
    <property type="match status" value="1"/>
</dbReference>
<dbReference type="FunFam" id="3.30.70.920:FF:000001">
    <property type="entry name" value="Transcriptional regulator, AsnC family"/>
    <property type="match status" value="1"/>
</dbReference>
<dbReference type="Gene3D" id="3.30.70.920">
    <property type="match status" value="1"/>
</dbReference>
<dbReference type="Gene3D" id="1.10.10.10">
    <property type="entry name" value="Winged helix-like DNA-binding domain superfamily/Winged helix DNA-binding domain"/>
    <property type="match status" value="1"/>
</dbReference>
<dbReference type="InterPro" id="IPR011991">
    <property type="entry name" value="ArsR-like_HTH"/>
</dbReference>
<dbReference type="InterPro" id="IPR000485">
    <property type="entry name" value="AsnC-type_HTH_dom"/>
</dbReference>
<dbReference type="InterPro" id="IPR011008">
    <property type="entry name" value="Dimeric_a/b-barrel"/>
</dbReference>
<dbReference type="InterPro" id="IPR019888">
    <property type="entry name" value="Tscrpt_reg_AsnC-like"/>
</dbReference>
<dbReference type="InterPro" id="IPR019887">
    <property type="entry name" value="Tscrpt_reg_AsnC/Lrp_C"/>
</dbReference>
<dbReference type="InterPro" id="IPR019885">
    <property type="entry name" value="Tscrpt_reg_HTH_AsnC-type_CS"/>
</dbReference>
<dbReference type="InterPro" id="IPR036388">
    <property type="entry name" value="WH-like_DNA-bd_sf"/>
</dbReference>
<dbReference type="InterPro" id="IPR036390">
    <property type="entry name" value="WH_DNA-bd_sf"/>
</dbReference>
<dbReference type="NCBIfam" id="NF008370">
    <property type="entry name" value="PRK11169.1"/>
    <property type="match status" value="1"/>
</dbReference>
<dbReference type="PANTHER" id="PTHR30154">
    <property type="entry name" value="LEUCINE-RESPONSIVE REGULATORY PROTEIN"/>
    <property type="match status" value="1"/>
</dbReference>
<dbReference type="PANTHER" id="PTHR30154:SF0">
    <property type="entry name" value="LEUCINE-RESPONSIVE REGULATORY PROTEIN"/>
    <property type="match status" value="1"/>
</dbReference>
<dbReference type="Pfam" id="PF01037">
    <property type="entry name" value="AsnC_trans_reg"/>
    <property type="match status" value="1"/>
</dbReference>
<dbReference type="Pfam" id="PF13412">
    <property type="entry name" value="HTH_24"/>
    <property type="match status" value="1"/>
</dbReference>
<dbReference type="PRINTS" id="PR00033">
    <property type="entry name" value="HTHASNC"/>
</dbReference>
<dbReference type="SMART" id="SM00344">
    <property type="entry name" value="HTH_ASNC"/>
    <property type="match status" value="1"/>
</dbReference>
<dbReference type="SUPFAM" id="SSF54909">
    <property type="entry name" value="Dimeric alpha+beta barrel"/>
    <property type="match status" value="1"/>
</dbReference>
<dbReference type="SUPFAM" id="SSF46785">
    <property type="entry name" value="Winged helix' DNA-binding domain"/>
    <property type="match status" value="1"/>
</dbReference>
<dbReference type="PROSITE" id="PS00519">
    <property type="entry name" value="HTH_ASNC_1"/>
    <property type="match status" value="1"/>
</dbReference>
<dbReference type="PROSITE" id="PS50956">
    <property type="entry name" value="HTH_ASNC_2"/>
    <property type="match status" value="1"/>
</dbReference>
<proteinExistence type="evidence at protein level"/>
<organism>
    <name type="scientific">Escherichia coli (strain K12)</name>
    <dbReference type="NCBI Taxonomy" id="83333"/>
    <lineage>
        <taxon>Bacteria</taxon>
        <taxon>Pseudomonadati</taxon>
        <taxon>Pseudomonadota</taxon>
        <taxon>Gammaproteobacteria</taxon>
        <taxon>Enterobacterales</taxon>
        <taxon>Enterobacteriaceae</taxon>
        <taxon>Escherichia</taxon>
    </lineage>
</organism>
<name>LRP_ECOLI</name>
<sequence length="164" mass="18887">MVDSKKRPGKDLDRIDRNILNELQKDGRISNVELSKRVGLSPTPCLERVRRLERQGFIQGYTALLNPHYLDASLLVFVEITLNRGAPDVFEQFNTAVQKLEEIQECHLVSGDFDYLLKTRVPDMSAYRKLLGETLLRLPGVNDTRTYVVMEEVKQSNRLVIKTR</sequence>
<comment type="function">
    <text>Mediates a global response to leucine. Exogenous leucine affects the expression of a number of different operons; lrp mediates this effect for at least some of these operons. For example it is regulator of the branched-chain amino acid transport genes.</text>
</comment>
<comment type="subunit">
    <text>Homodimer.</text>
</comment>
<comment type="interaction">
    <interactant intactId="EBI-1113316">
        <id>P0ACJ0</id>
    </interactant>
    <interactant intactId="EBI-1113316">
        <id>P0ACJ0</id>
        <label>lrp</label>
    </interactant>
    <organismsDiffer>false</organismsDiffer>
    <experiments>2</experiments>
</comment>
<comment type="interaction">
    <interactant intactId="EBI-1113316">
        <id>P0ACJ0</id>
    </interactant>
    <interactant intactId="EBI-553769">
        <id>P0AFW4</id>
        <label>rnk</label>
    </interactant>
    <organismsDiffer>false</organismsDiffer>
    <experiments>4</experiments>
</comment>
<evidence type="ECO:0000255" key="1">
    <source>
        <dbReference type="PROSITE-ProRule" id="PRU00319"/>
    </source>
</evidence>
<evidence type="ECO:0007829" key="2">
    <source>
        <dbReference type="PDB" id="2GQQ"/>
    </source>
</evidence>
<evidence type="ECO:0007829" key="3">
    <source>
        <dbReference type="PDB" id="2L4A"/>
    </source>
</evidence>
<protein>
    <recommendedName>
        <fullName>Leucine-responsive regulatory protein</fullName>
    </recommendedName>
</protein>
<feature type="initiator methionine" description="Removed">
    <location>
        <position position="1"/>
    </location>
</feature>
<feature type="chain" id="PRO_0000111728" description="Leucine-responsive regulatory protein">
    <location>
        <begin position="2"/>
        <end position="164"/>
    </location>
</feature>
<feature type="domain" description="HTH asnC-type" evidence="1">
    <location>
        <begin position="12"/>
        <end position="73"/>
    </location>
</feature>
<feature type="DNA-binding region" description="H-T-H motif" evidence="1">
    <location>
        <begin position="31"/>
        <end position="50"/>
    </location>
</feature>
<feature type="sequence variant" description="In lrp-1 mutant.">
    <original>D</original>
    <variation>E</variation>
    <location>
        <position position="114"/>
    </location>
</feature>
<feature type="helix" evidence="3">
    <location>
        <begin position="9"/>
        <end position="11"/>
    </location>
</feature>
<feature type="helix" evidence="2">
    <location>
        <begin position="15"/>
        <end position="25"/>
    </location>
</feature>
<feature type="helix" evidence="2">
    <location>
        <begin position="33"/>
        <end position="35"/>
    </location>
</feature>
<feature type="strand" evidence="2">
    <location>
        <begin position="37"/>
        <end position="39"/>
    </location>
</feature>
<feature type="turn" evidence="2">
    <location>
        <begin position="42"/>
        <end position="44"/>
    </location>
</feature>
<feature type="strand" evidence="2">
    <location>
        <begin position="45"/>
        <end position="47"/>
    </location>
</feature>
<feature type="helix" evidence="2">
    <location>
        <begin position="49"/>
        <end position="55"/>
    </location>
</feature>
<feature type="strand" evidence="2">
    <location>
        <begin position="56"/>
        <end position="65"/>
    </location>
</feature>
<feature type="turn" evidence="2">
    <location>
        <begin position="67"/>
        <end position="71"/>
    </location>
</feature>
<feature type="strand" evidence="2">
    <location>
        <begin position="75"/>
        <end position="81"/>
    </location>
</feature>
<feature type="helix" evidence="2">
    <location>
        <begin position="89"/>
        <end position="97"/>
    </location>
</feature>
<feature type="strand" evidence="2">
    <location>
        <begin position="103"/>
        <end position="120"/>
    </location>
</feature>
<feature type="helix" evidence="2">
    <location>
        <begin position="124"/>
        <end position="130"/>
    </location>
</feature>
<feature type="turn" evidence="2">
    <location>
        <begin position="131"/>
        <end position="133"/>
    </location>
</feature>
<feature type="strand" evidence="2">
    <location>
        <begin position="138"/>
        <end position="140"/>
    </location>
</feature>
<feature type="strand" evidence="2">
    <location>
        <begin position="142"/>
        <end position="155"/>
    </location>
</feature>